<dbReference type="EC" id="1.6.5.2" evidence="1"/>
<dbReference type="EMBL" id="CP001164">
    <property type="protein sequence ID" value="ACI39691.1"/>
    <property type="molecule type" value="Genomic_DNA"/>
</dbReference>
<dbReference type="RefSeq" id="WP_000600700.1">
    <property type="nucleotide sequence ID" value="NC_011353.1"/>
</dbReference>
<dbReference type="SMR" id="B5YZ82"/>
<dbReference type="KEGG" id="ecf:ECH74115_0050"/>
<dbReference type="HOGENOM" id="CLU_058643_0_2_6"/>
<dbReference type="GO" id="GO:0005886">
    <property type="term" value="C:plasma membrane"/>
    <property type="evidence" value="ECO:0007669"/>
    <property type="project" value="UniProtKB-SubCell"/>
</dbReference>
<dbReference type="GO" id="GO:0009055">
    <property type="term" value="F:electron transfer activity"/>
    <property type="evidence" value="ECO:0007669"/>
    <property type="project" value="TreeGrafter"/>
</dbReference>
<dbReference type="GO" id="GO:0010181">
    <property type="term" value="F:FMN binding"/>
    <property type="evidence" value="ECO:0007669"/>
    <property type="project" value="UniProtKB-UniRule"/>
</dbReference>
<dbReference type="GO" id="GO:0050136">
    <property type="term" value="F:NADH:ubiquinone reductase (non-electrogenic) activity"/>
    <property type="evidence" value="ECO:0007669"/>
    <property type="project" value="RHEA"/>
</dbReference>
<dbReference type="GO" id="GO:0008753">
    <property type="term" value="F:NADPH dehydrogenase (quinone) activity"/>
    <property type="evidence" value="ECO:0007669"/>
    <property type="project" value="RHEA"/>
</dbReference>
<dbReference type="GO" id="GO:1901381">
    <property type="term" value="P:positive regulation of potassium ion transmembrane transport"/>
    <property type="evidence" value="ECO:0007669"/>
    <property type="project" value="UniProtKB-UniRule"/>
</dbReference>
<dbReference type="GO" id="GO:0006813">
    <property type="term" value="P:potassium ion transport"/>
    <property type="evidence" value="ECO:0007669"/>
    <property type="project" value="InterPro"/>
</dbReference>
<dbReference type="FunFam" id="3.40.50.360:FF:000008">
    <property type="entry name" value="Glutathione-regulated potassium-efflux system ancillary protein KefF"/>
    <property type="match status" value="1"/>
</dbReference>
<dbReference type="Gene3D" id="3.40.50.360">
    <property type="match status" value="1"/>
</dbReference>
<dbReference type="HAMAP" id="MF_01414">
    <property type="entry name" value="K_H_efflux_KefF"/>
    <property type="match status" value="1"/>
</dbReference>
<dbReference type="InterPro" id="IPR003680">
    <property type="entry name" value="Flavodoxin_fold"/>
</dbReference>
<dbReference type="InterPro" id="IPR029039">
    <property type="entry name" value="Flavoprotein-like_sf"/>
</dbReference>
<dbReference type="InterPro" id="IPR023948">
    <property type="entry name" value="K_H_efflux_KefF"/>
</dbReference>
<dbReference type="InterPro" id="IPR046980">
    <property type="entry name" value="KefG/KefF"/>
</dbReference>
<dbReference type="NCBIfam" id="NF002044">
    <property type="entry name" value="PRK00871.1"/>
    <property type="match status" value="1"/>
</dbReference>
<dbReference type="PANTHER" id="PTHR47307:SF2">
    <property type="entry name" value="GLUTATHIONE-REGULATED POTASSIUM-EFFLUX SYSTEM ANCILLARY PROTEIN KEFF"/>
    <property type="match status" value="1"/>
</dbReference>
<dbReference type="PANTHER" id="PTHR47307">
    <property type="entry name" value="GLUTATHIONE-REGULATED POTASSIUM-EFFLUX SYSTEM ANCILLARY PROTEIN KEFG"/>
    <property type="match status" value="1"/>
</dbReference>
<dbReference type="Pfam" id="PF02525">
    <property type="entry name" value="Flavodoxin_2"/>
    <property type="match status" value="1"/>
</dbReference>
<dbReference type="SUPFAM" id="SSF52218">
    <property type="entry name" value="Flavoproteins"/>
    <property type="match status" value="1"/>
</dbReference>
<accession>B5YZ82</accession>
<comment type="function">
    <text evidence="1">Regulatory subunit of a potassium efflux system that confers protection against electrophiles. Required for full activity of KefC. Shows redox enzymatic activity, but this enzymatic activity is not required for activation of KefC.</text>
</comment>
<comment type="catalytic activity">
    <reaction evidence="1">
        <text>a quinone + NADH + H(+) = a quinol + NAD(+)</text>
        <dbReference type="Rhea" id="RHEA:46160"/>
        <dbReference type="ChEBI" id="CHEBI:15378"/>
        <dbReference type="ChEBI" id="CHEBI:24646"/>
        <dbReference type="ChEBI" id="CHEBI:57540"/>
        <dbReference type="ChEBI" id="CHEBI:57945"/>
        <dbReference type="ChEBI" id="CHEBI:132124"/>
        <dbReference type="EC" id="1.6.5.2"/>
    </reaction>
</comment>
<comment type="catalytic activity">
    <reaction evidence="1">
        <text>a quinone + NADPH + H(+) = a quinol + NADP(+)</text>
        <dbReference type="Rhea" id="RHEA:46164"/>
        <dbReference type="ChEBI" id="CHEBI:15378"/>
        <dbReference type="ChEBI" id="CHEBI:24646"/>
        <dbReference type="ChEBI" id="CHEBI:57783"/>
        <dbReference type="ChEBI" id="CHEBI:58349"/>
        <dbReference type="ChEBI" id="CHEBI:132124"/>
        <dbReference type="EC" id="1.6.5.2"/>
    </reaction>
</comment>
<comment type="cofactor">
    <cofactor evidence="1">
        <name>FMN</name>
        <dbReference type="ChEBI" id="CHEBI:58210"/>
    </cofactor>
</comment>
<comment type="subunit">
    <text evidence="1">Homodimer. Interacts with KefC.</text>
</comment>
<comment type="subcellular location">
    <subcellularLocation>
        <location evidence="1">Cell inner membrane</location>
        <topology evidence="1">Peripheral membrane protein</topology>
        <orientation evidence="1">Cytoplasmic side</orientation>
    </subcellularLocation>
</comment>
<comment type="similarity">
    <text evidence="1">Belongs to the NAD(P)H dehydrogenase (quinone) family. KefF subfamily.</text>
</comment>
<proteinExistence type="inferred from homology"/>
<organism>
    <name type="scientific">Escherichia coli O157:H7 (strain EC4115 / EHEC)</name>
    <dbReference type="NCBI Taxonomy" id="444450"/>
    <lineage>
        <taxon>Bacteria</taxon>
        <taxon>Pseudomonadati</taxon>
        <taxon>Pseudomonadota</taxon>
        <taxon>Gammaproteobacteria</taxon>
        <taxon>Enterobacterales</taxon>
        <taxon>Enterobacteriaceae</taxon>
        <taxon>Escherichia</taxon>
    </lineage>
</organism>
<protein>
    <recommendedName>
        <fullName evidence="1">Glutathione-regulated potassium-efflux system ancillary protein KefF</fullName>
    </recommendedName>
    <alternativeName>
        <fullName evidence="1">Quinone oxidoreductase KefF</fullName>
        <ecNumber evidence="1">1.6.5.2</ecNumber>
    </alternativeName>
</protein>
<name>KEFF_ECO5E</name>
<feature type="chain" id="PRO_1000145554" description="Glutathione-regulated potassium-efflux system ancillary protein KefF">
    <location>
        <begin position="1"/>
        <end position="176"/>
    </location>
</feature>
<feature type="binding site" evidence="1">
    <location>
        <position position="8"/>
    </location>
    <ligand>
        <name>FMN</name>
        <dbReference type="ChEBI" id="CHEBI:58210"/>
    </ligand>
</feature>
<feature type="binding site" evidence="1">
    <location>
        <begin position="14"/>
        <end position="17"/>
    </location>
    <ligand>
        <name>FMN</name>
        <dbReference type="ChEBI" id="CHEBI:58210"/>
    </ligand>
</feature>
<feature type="binding site" evidence="1">
    <location>
        <begin position="65"/>
        <end position="68"/>
    </location>
    <ligand>
        <name>FMN</name>
        <dbReference type="ChEBI" id="CHEBI:58210"/>
    </ligand>
</feature>
<feature type="binding site" evidence="1">
    <location>
        <begin position="105"/>
        <end position="108"/>
    </location>
    <ligand>
        <name>FMN</name>
        <dbReference type="ChEBI" id="CHEBI:58210"/>
    </ligand>
</feature>
<gene>
    <name evidence="1" type="primary">kefF</name>
    <name type="ordered locus">ECH74115_0050</name>
</gene>
<evidence type="ECO:0000255" key="1">
    <source>
        <dbReference type="HAMAP-Rule" id="MF_01414"/>
    </source>
</evidence>
<sequence length="176" mass="20204">MILIIYAHPYPHHSHANKRMFEQARTLEGVEIRSLYQLYPDFNIDIAAEQEALSRADLIVWQHPMQWYSIPPLLKLWIDKVFSHGWAYGHGGTALHGKHLLWAVTTGGGESHFEIGAHPGFDVLSQPLQATAIYCGLNWLPPFAMHCTFICDDETLEGQARHYKQRLLEWQEAHHG</sequence>
<reference key="1">
    <citation type="journal article" date="2011" name="Proc. Natl. Acad. Sci. U.S.A.">
        <title>Genomic anatomy of Escherichia coli O157:H7 outbreaks.</title>
        <authorList>
            <person name="Eppinger M."/>
            <person name="Mammel M.K."/>
            <person name="Leclerc J.E."/>
            <person name="Ravel J."/>
            <person name="Cebula T.A."/>
        </authorList>
    </citation>
    <scope>NUCLEOTIDE SEQUENCE [LARGE SCALE GENOMIC DNA]</scope>
    <source>
        <strain>EC4115 / EHEC</strain>
    </source>
</reference>
<keyword id="KW-0997">Cell inner membrane</keyword>
<keyword id="KW-1003">Cell membrane</keyword>
<keyword id="KW-0285">Flavoprotein</keyword>
<keyword id="KW-0288">FMN</keyword>
<keyword id="KW-0472">Membrane</keyword>
<keyword id="KW-0520">NAD</keyword>
<keyword id="KW-0560">Oxidoreductase</keyword>